<protein>
    <recommendedName>
        <fullName>Histone H3.2</fullName>
    </recommendedName>
</protein>
<evidence type="ECO:0000250" key="1"/>
<evidence type="ECO:0000256" key="2">
    <source>
        <dbReference type="SAM" id="MobiDB-lite"/>
    </source>
</evidence>
<evidence type="ECO:0000305" key="3"/>
<proteinExistence type="inferred from homology"/>
<sequence>MARTKQTARKSTGAKAPRKQLASKAARKSAPATGGIKKPHR</sequence>
<accession>P69127</accession>
<accession>P17705</accession>
<dbReference type="EMBL" id="X17145">
    <property type="protein sequence ID" value="CAA35024.1"/>
    <property type="status" value="ALT_SEQ"/>
    <property type="molecule type" value="Genomic_DNA"/>
</dbReference>
<dbReference type="GO" id="GO:0000786">
    <property type="term" value="C:nucleosome"/>
    <property type="evidence" value="ECO:0007669"/>
    <property type="project" value="UniProtKB-KW"/>
</dbReference>
<dbReference type="GO" id="GO:0005634">
    <property type="term" value="C:nucleus"/>
    <property type="evidence" value="ECO:0007669"/>
    <property type="project" value="UniProtKB-SubCell"/>
</dbReference>
<dbReference type="GO" id="GO:0003677">
    <property type="term" value="F:DNA binding"/>
    <property type="evidence" value="ECO:0007669"/>
    <property type="project" value="UniProtKB-KW"/>
</dbReference>
<dbReference type="GO" id="GO:0046982">
    <property type="term" value="F:protein heterodimerization activity"/>
    <property type="evidence" value="ECO:0007669"/>
    <property type="project" value="InterPro"/>
</dbReference>
<dbReference type="GO" id="GO:0030527">
    <property type="term" value="F:structural constituent of chromatin"/>
    <property type="evidence" value="ECO:0007669"/>
    <property type="project" value="InterPro"/>
</dbReference>
<dbReference type="Gene3D" id="1.10.20.10">
    <property type="entry name" value="Histone, subunit A"/>
    <property type="match status" value="1"/>
</dbReference>
<dbReference type="InterPro" id="IPR009072">
    <property type="entry name" value="Histone-fold"/>
</dbReference>
<dbReference type="InterPro" id="IPR000164">
    <property type="entry name" value="Histone_H3/CENP-A"/>
</dbReference>
<dbReference type="PANTHER" id="PTHR11426">
    <property type="entry name" value="HISTONE H3"/>
    <property type="match status" value="1"/>
</dbReference>
<dbReference type="PRINTS" id="PR00622">
    <property type="entry name" value="HISTONEH3"/>
</dbReference>
<dbReference type="SUPFAM" id="SSF47113">
    <property type="entry name" value="Histone-fold"/>
    <property type="match status" value="1"/>
</dbReference>
<dbReference type="PROSITE" id="PS00322">
    <property type="entry name" value="HISTONE_H3_1"/>
    <property type="match status" value="1"/>
</dbReference>
<keyword id="KW-0158">Chromosome</keyword>
<keyword id="KW-0238">DNA-binding</keyword>
<keyword id="KW-0544">Nucleosome core</keyword>
<keyword id="KW-0539">Nucleus</keyword>
<name>H32_TETTR</name>
<organism>
    <name type="scientific">Tetrahymena tropicalis</name>
    <dbReference type="NCBI Taxonomy" id="5912"/>
    <lineage>
        <taxon>Eukaryota</taxon>
        <taxon>Sar</taxon>
        <taxon>Alveolata</taxon>
        <taxon>Ciliophora</taxon>
        <taxon>Intramacronucleata</taxon>
        <taxon>Oligohymenophorea</taxon>
        <taxon>Hymenostomatida</taxon>
        <taxon>Tetrahymenina</taxon>
        <taxon>Tetrahymenidae</taxon>
        <taxon>Tetrahymena</taxon>
    </lineage>
</organism>
<feature type="initiator methionine" description="Removed" evidence="1">
    <location>
        <position position="1"/>
    </location>
</feature>
<feature type="chain" id="PRO_0000221350" description="Histone H3.2">
    <location>
        <begin position="2"/>
        <end position="41" status="greater than"/>
    </location>
</feature>
<feature type="region of interest" description="Disordered" evidence="2">
    <location>
        <begin position="1"/>
        <end position="41"/>
    </location>
</feature>
<feature type="non-terminal residue">
    <location>
        <position position="41"/>
    </location>
</feature>
<comment type="function">
    <text>Core component of nucleosome. Nucleosomes wrap and compact DNA into chromatin, limiting DNA accessibility to the cellular machineries which require DNA as a template. Histones thereby play a central role in transcription regulation, DNA repair, DNA replication and chromosomal stability. DNA accessibility is regulated via a complex set of post-translational modifications of histones, also called histone code, and nucleosome remodeling.</text>
</comment>
<comment type="subunit">
    <text>The nucleosome is a histone octamer containing two molecules each of H2A, H2B, H3 and H4 assembled in one H3-H4 heterotetramer and two H2A-H2B heterodimers. The octamer wraps approximately 147 bp of DNA.</text>
</comment>
<comment type="subcellular location">
    <subcellularLocation>
        <location evidence="1">Nucleus</location>
    </subcellularLocation>
    <subcellularLocation>
        <location evidence="1">Chromosome</location>
    </subcellularLocation>
</comment>
<comment type="similarity">
    <text evidence="3">Belongs to the histone H3 family.</text>
</comment>
<reference key="1">
    <citation type="journal article" date="1990" name="Nucleic Acids Res.">
        <title>Characterization of the promoter region of Tetrahymena genes.</title>
        <authorList>
            <person name="Brunk C.F."/>
            <person name="Sadler L.A."/>
        </authorList>
    </citation>
    <scope>NUCLEOTIDE SEQUENCE [GENOMIC DNA]</scope>
</reference>
<reference key="2">
    <citation type="journal article" date="1990" name="J. Mol. Evol.">
        <title>Phylogenetic relationships among Tetrahymena species determined using the polymerase chain reaction.</title>
        <authorList>
            <person name="Brunk C.F."/>
            <person name="Kahn R.W."/>
            <person name="Sadler L.A."/>
        </authorList>
    </citation>
    <scope>NUCLEOTIDE SEQUENCE [GENOMIC DNA]</scope>
</reference>